<dbReference type="EMBL" id="AL590451">
    <property type="protein sequence ID" value="CAD27017.1"/>
    <property type="molecule type" value="Genomic_DNA"/>
</dbReference>
<dbReference type="RefSeq" id="NP_001402298.1">
    <property type="nucleotide sequence ID" value="NM_001415348.1"/>
</dbReference>
<dbReference type="RefSeq" id="XP_955598.1">
    <property type="nucleotide sequence ID" value="XM_950505.1"/>
</dbReference>
<dbReference type="SMR" id="Q8SQP3"/>
<dbReference type="STRING" id="284813.Q8SQP3"/>
<dbReference type="GeneID" id="860383"/>
<dbReference type="VEuPathDB" id="MicrosporidiaDB:ECU09_0450"/>
<dbReference type="HOGENOM" id="CLU_078295_4_0_1"/>
<dbReference type="InParanoid" id="Q8SQP3"/>
<dbReference type="OMA" id="RKYQHST"/>
<dbReference type="OrthoDB" id="842664at2759"/>
<dbReference type="Proteomes" id="UP000000819">
    <property type="component" value="Chromosome IX"/>
</dbReference>
<dbReference type="GO" id="GO:0000786">
    <property type="term" value="C:nucleosome"/>
    <property type="evidence" value="ECO:0007669"/>
    <property type="project" value="UniProtKB-KW"/>
</dbReference>
<dbReference type="GO" id="GO:0005634">
    <property type="term" value="C:nucleus"/>
    <property type="evidence" value="ECO:0007669"/>
    <property type="project" value="UniProtKB-SubCell"/>
</dbReference>
<dbReference type="GO" id="GO:0003677">
    <property type="term" value="F:DNA binding"/>
    <property type="evidence" value="ECO:0007669"/>
    <property type="project" value="UniProtKB-KW"/>
</dbReference>
<dbReference type="GO" id="GO:0046982">
    <property type="term" value="F:protein heterodimerization activity"/>
    <property type="evidence" value="ECO:0007669"/>
    <property type="project" value="InterPro"/>
</dbReference>
<dbReference type="GO" id="GO:0030527">
    <property type="term" value="F:structural constituent of chromatin"/>
    <property type="evidence" value="ECO:0007669"/>
    <property type="project" value="InterPro"/>
</dbReference>
<dbReference type="CDD" id="cd22911">
    <property type="entry name" value="HFD_H3"/>
    <property type="match status" value="1"/>
</dbReference>
<dbReference type="FunFam" id="1.10.20.10:FF:000085">
    <property type="entry name" value="Histone H3.2"/>
    <property type="match status" value="1"/>
</dbReference>
<dbReference type="Gene3D" id="1.10.20.10">
    <property type="entry name" value="Histone, subunit A"/>
    <property type="match status" value="1"/>
</dbReference>
<dbReference type="InterPro" id="IPR009072">
    <property type="entry name" value="Histone-fold"/>
</dbReference>
<dbReference type="InterPro" id="IPR007125">
    <property type="entry name" value="Histone_H2A/H2B/H3"/>
</dbReference>
<dbReference type="InterPro" id="IPR000164">
    <property type="entry name" value="Histone_H3/CENP-A"/>
</dbReference>
<dbReference type="PANTHER" id="PTHR45810:SF1">
    <property type="entry name" value="HISTONE H3-LIKE CENTROMERIC PROTEIN A"/>
    <property type="match status" value="1"/>
</dbReference>
<dbReference type="PANTHER" id="PTHR45810">
    <property type="entry name" value="HISTONE H3.2"/>
    <property type="match status" value="1"/>
</dbReference>
<dbReference type="Pfam" id="PF00125">
    <property type="entry name" value="Histone"/>
    <property type="match status" value="1"/>
</dbReference>
<dbReference type="PRINTS" id="PR00622">
    <property type="entry name" value="HISTONEH3"/>
</dbReference>
<dbReference type="SMART" id="SM00428">
    <property type="entry name" value="H3"/>
    <property type="match status" value="1"/>
</dbReference>
<dbReference type="SUPFAM" id="SSF47113">
    <property type="entry name" value="Histone-fold"/>
    <property type="match status" value="1"/>
</dbReference>
<accession>Q8SQP3</accession>
<keyword id="KW-0007">Acetylation</keyword>
<keyword id="KW-0158">Chromosome</keyword>
<keyword id="KW-0238">DNA-binding</keyword>
<keyword id="KW-0488">Methylation</keyword>
<keyword id="KW-0544">Nucleosome core</keyword>
<keyword id="KW-0539">Nucleus</keyword>
<keyword id="KW-1185">Reference proteome</keyword>
<organism>
    <name type="scientific">Encephalitozoon cuniculi (strain GB-M1)</name>
    <name type="common">Microsporidian parasite</name>
    <dbReference type="NCBI Taxonomy" id="284813"/>
    <lineage>
        <taxon>Eukaryota</taxon>
        <taxon>Fungi</taxon>
        <taxon>Fungi incertae sedis</taxon>
        <taxon>Microsporidia</taxon>
        <taxon>Unikaryonidae</taxon>
        <taxon>Encephalitozoon</taxon>
    </lineage>
</organism>
<gene>
    <name type="ordered locus">ECU09_0450</name>
</gene>
<evidence type="ECO:0000250" key="1"/>
<evidence type="ECO:0000256" key="2">
    <source>
        <dbReference type="SAM" id="MobiDB-lite"/>
    </source>
</evidence>
<evidence type="ECO:0000305" key="3"/>
<name>H3L_ENCCU</name>
<protein>
    <recommendedName>
        <fullName>Histone H3-like protein</fullName>
    </recommendedName>
</protein>
<comment type="function">
    <text>Core component of nucleosome. Nucleosomes wrap and compact DNA into chromatin, limiting DNA accessibility to the cellular machineries which require DNA as a template. Histones thereby play a central role in transcription regulation, DNA repair, DNA replication and chromosomal stability. DNA accessibility is regulated via a complex set of post-translational modifications of histones, also called histone code, and nucleosome remodeling.</text>
</comment>
<comment type="subunit">
    <text>The nucleosome is a histone octamer containing two molecules each of H2A, H2B, H3 and H4 assembled in one H3-H4 heterotetramer and two H2A-H2B heterodimers. The octamer wraps approximately 147 bp of DNA.</text>
</comment>
<comment type="subcellular location">
    <subcellularLocation>
        <location evidence="1">Nucleus</location>
    </subcellularLocation>
    <subcellularLocation>
        <location evidence="1">Chromosome</location>
    </subcellularLocation>
</comment>
<comment type="PTM">
    <text evidence="1">Mono-, di- and trimethylated to form H3K4me1/2/3. H3K4me activates gene expression by regulating transcription elongation and plays a role in telomere length maintenance. H3K4me enrichment correlates with transcription levels, and occurs in a 5' to 3' gradient with H3K4me3 enrichment at the 5'-end of genes, shifting to H3K4me2 and then H3K4me1 (By similarity).</text>
</comment>
<comment type="PTM">
    <text evidence="1">Acetylation of histone H3 leads to transcriptional activation.</text>
</comment>
<comment type="similarity">
    <text evidence="3">Belongs to the histone H3 family.</text>
</comment>
<comment type="caution">
    <text evidence="3">To ensure consistency between histone entries, we follow the 'Brno' nomenclature for histone modifications, with positions referring to those used in the literature for the 'closest' model organism. Due to slight variations in histone sequences between organisms and to the presence of initiator methionine in UniProtKB/Swiss-Prot sequences, the actual positions of modified amino acids in the sequence generally differ. In this entry the following conventions are used: H3K4me1/2/3 = mono-, di- and trimethylated Lys-5; H3K9ac = acetylated Lys-10; H3K9me1 = monomethylated Lys-10; H3K14ac = acetylated Lys-15; H3K14me2 = dimethylated Lys-15; H3K18ac = acetylated Lys-19; H3K18me1 = monomethylated Lys-19; H3K23ac = acetylated Lys-24; H3K23me1 = monomethylated Lys-24; H3K56ac = acetylated Lys-56; H3K64ac = acetylated Lys-64.</text>
</comment>
<proteinExistence type="inferred from homology"/>
<feature type="initiator methionine" description="Removed" evidence="1">
    <location>
        <position position="1"/>
    </location>
</feature>
<feature type="chain" id="PRO_0000221361" description="Histone H3-like protein">
    <location>
        <begin position="2"/>
        <end position="140"/>
    </location>
</feature>
<feature type="region of interest" description="Disordered" evidence="2">
    <location>
        <begin position="1"/>
        <end position="36"/>
    </location>
</feature>
<feature type="modified residue" description="N6,N6,N6-trimethyllysine; alternate" evidence="1">
    <location>
        <position position="5"/>
    </location>
</feature>
<feature type="modified residue" description="N6,N6-dimethyllysine; alternate" evidence="1">
    <location>
        <position position="5"/>
    </location>
</feature>
<feature type="modified residue" description="N6-methyllysine; alternate" evidence="1">
    <location>
        <position position="5"/>
    </location>
</feature>
<feature type="modified residue" description="N6-acetyllysine; alternate" evidence="1">
    <location>
        <position position="10"/>
    </location>
</feature>
<feature type="modified residue" description="N6-methyllysine; alternate" evidence="1">
    <location>
        <position position="10"/>
    </location>
</feature>
<feature type="modified residue" description="N6,N6-dimethyllysine; alternate" evidence="1">
    <location>
        <position position="15"/>
    </location>
</feature>
<feature type="modified residue" description="N6-acetyllysine; alternate" evidence="1">
    <location>
        <position position="15"/>
    </location>
</feature>
<feature type="modified residue" description="N6-acetyllysine; alternate" evidence="1">
    <location>
        <position position="19"/>
    </location>
</feature>
<feature type="modified residue" description="N6-methyllysine; alternate" evidence="1">
    <location>
        <position position="19"/>
    </location>
</feature>
<feature type="modified residue" description="N6-acetyllysine; alternate" evidence="1">
    <location>
        <position position="24"/>
    </location>
</feature>
<feature type="modified residue" description="N6-methyllysine; alternate" evidence="1">
    <location>
        <position position="24"/>
    </location>
</feature>
<feature type="modified residue" description="N6-acetyllysine" evidence="1">
    <location>
        <position position="56"/>
    </location>
</feature>
<feature type="modified residue" description="N6-acetyllysine" evidence="1">
    <location>
        <position position="64"/>
    </location>
</feature>
<reference key="1">
    <citation type="journal article" date="2001" name="Nature">
        <title>Genome sequence and gene compaction of the eukaryote parasite Encephalitozoon cuniculi.</title>
        <authorList>
            <person name="Katinka M.D."/>
            <person name="Duprat S."/>
            <person name="Cornillot E."/>
            <person name="Metenier G."/>
            <person name="Thomarat F."/>
            <person name="Prensier G."/>
            <person name="Barbe V."/>
            <person name="Peyretaillade E."/>
            <person name="Brottier P."/>
            <person name="Wincker P."/>
            <person name="Delbac F."/>
            <person name="El Alaoui H."/>
            <person name="Peyret P."/>
            <person name="Saurin W."/>
            <person name="Gouy M."/>
            <person name="Weissenbach J."/>
            <person name="Vivares C.P."/>
        </authorList>
    </citation>
    <scope>NUCLEOTIDE SEQUENCE [LARGE SCALE GENOMIC DNA]</scope>
    <source>
        <strain>GB-M1</strain>
    </source>
</reference>
<sequence>MSRTKQTASKALGGKAPRKGISAKSIPSSGCSPAMPKRTRFKAGALALKEIRKYQKSTDLLIRKRPFQRMVRDLCKGREGVRFQASAIVAFQEAVENFLTSLMEDAYRCVLHAKRVTLMPKDICLVYKIKYANILYAALD</sequence>